<organism>
    <name type="scientific">Campylobacter fetus subsp. fetus (strain 82-40)</name>
    <dbReference type="NCBI Taxonomy" id="360106"/>
    <lineage>
        <taxon>Bacteria</taxon>
        <taxon>Pseudomonadati</taxon>
        <taxon>Campylobacterota</taxon>
        <taxon>Epsilonproteobacteria</taxon>
        <taxon>Campylobacterales</taxon>
        <taxon>Campylobacteraceae</taxon>
        <taxon>Campylobacter</taxon>
    </lineage>
</organism>
<feature type="chain" id="PRO_1000138768" description="Orotate phosphoribosyltransferase">
    <location>
        <begin position="1"/>
        <end position="202"/>
    </location>
</feature>
<feature type="binding site" evidence="1">
    <location>
        <position position="93"/>
    </location>
    <ligand>
        <name>5-phospho-alpha-D-ribose 1-diphosphate</name>
        <dbReference type="ChEBI" id="CHEBI:58017"/>
        <note>ligand shared between dimeric partners</note>
    </ligand>
</feature>
<feature type="binding site" description="in other chain" evidence="1">
    <location>
        <begin position="113"/>
        <end position="121"/>
    </location>
    <ligand>
        <name>5-phospho-alpha-D-ribose 1-diphosphate</name>
        <dbReference type="ChEBI" id="CHEBI:58017"/>
        <note>ligand shared between dimeric partners</note>
    </ligand>
</feature>
<feature type="binding site" evidence="1">
    <location>
        <position position="117"/>
    </location>
    <ligand>
        <name>orotate</name>
        <dbReference type="ChEBI" id="CHEBI:30839"/>
    </ligand>
</feature>
<feature type="binding site" evidence="1">
    <location>
        <position position="145"/>
    </location>
    <ligand>
        <name>orotate</name>
        <dbReference type="ChEBI" id="CHEBI:30839"/>
    </ligand>
</feature>
<name>PYRE_CAMFF</name>
<protein>
    <recommendedName>
        <fullName evidence="1">Orotate phosphoribosyltransferase</fullName>
        <shortName evidence="1">OPRT</shortName>
        <shortName evidence="1">OPRTase</shortName>
        <ecNumber evidence="1">2.4.2.10</ecNumber>
    </recommendedName>
</protein>
<proteinExistence type="inferred from homology"/>
<evidence type="ECO:0000255" key="1">
    <source>
        <dbReference type="HAMAP-Rule" id="MF_01208"/>
    </source>
</evidence>
<keyword id="KW-0328">Glycosyltransferase</keyword>
<keyword id="KW-0460">Magnesium</keyword>
<keyword id="KW-0665">Pyrimidine biosynthesis</keyword>
<keyword id="KW-0808">Transferase</keyword>
<reference key="1">
    <citation type="submission" date="2006-11" db="EMBL/GenBank/DDBJ databases">
        <title>Sequence of Campylobacter fetus subsp. fetus 82-40.</title>
        <authorList>
            <person name="Fouts D.E."/>
            <person name="Nelson K.E."/>
        </authorList>
    </citation>
    <scope>NUCLEOTIDE SEQUENCE [LARGE SCALE GENOMIC DNA]</scope>
    <source>
        <strain>82-40</strain>
    </source>
</reference>
<gene>
    <name evidence="1" type="primary">pyrE</name>
    <name type="ordered locus">CFF8240_1780</name>
</gene>
<dbReference type="EC" id="2.4.2.10" evidence="1"/>
<dbReference type="EMBL" id="CP000487">
    <property type="protein sequence ID" value="ABK82607.1"/>
    <property type="molecule type" value="Genomic_DNA"/>
</dbReference>
<dbReference type="RefSeq" id="WP_010400060.1">
    <property type="nucleotide sequence ID" value="NC_008599.1"/>
</dbReference>
<dbReference type="SMR" id="A0RRR2"/>
<dbReference type="GeneID" id="61065589"/>
<dbReference type="KEGG" id="cff:CFF8240_1780"/>
<dbReference type="eggNOG" id="COG0461">
    <property type="taxonomic scope" value="Bacteria"/>
</dbReference>
<dbReference type="HOGENOM" id="CLU_074878_3_0_7"/>
<dbReference type="UniPathway" id="UPA00070">
    <property type="reaction ID" value="UER00119"/>
</dbReference>
<dbReference type="Proteomes" id="UP000000760">
    <property type="component" value="Chromosome"/>
</dbReference>
<dbReference type="GO" id="GO:0000287">
    <property type="term" value="F:magnesium ion binding"/>
    <property type="evidence" value="ECO:0007669"/>
    <property type="project" value="UniProtKB-UniRule"/>
</dbReference>
<dbReference type="GO" id="GO:0004588">
    <property type="term" value="F:orotate phosphoribosyltransferase activity"/>
    <property type="evidence" value="ECO:0007669"/>
    <property type="project" value="UniProtKB-UniRule"/>
</dbReference>
<dbReference type="GO" id="GO:0044205">
    <property type="term" value="P:'de novo' UMP biosynthetic process"/>
    <property type="evidence" value="ECO:0007669"/>
    <property type="project" value="UniProtKB-UniRule"/>
</dbReference>
<dbReference type="GO" id="GO:0019856">
    <property type="term" value="P:pyrimidine nucleobase biosynthetic process"/>
    <property type="evidence" value="ECO:0007669"/>
    <property type="project" value="InterPro"/>
</dbReference>
<dbReference type="CDD" id="cd06223">
    <property type="entry name" value="PRTases_typeI"/>
    <property type="match status" value="1"/>
</dbReference>
<dbReference type="Gene3D" id="3.40.50.2020">
    <property type="match status" value="1"/>
</dbReference>
<dbReference type="HAMAP" id="MF_01208">
    <property type="entry name" value="PyrE"/>
    <property type="match status" value="1"/>
</dbReference>
<dbReference type="InterPro" id="IPR023031">
    <property type="entry name" value="OPRT"/>
</dbReference>
<dbReference type="InterPro" id="IPR006273">
    <property type="entry name" value="Orotate_PRibTrfase_bac"/>
</dbReference>
<dbReference type="InterPro" id="IPR000836">
    <property type="entry name" value="PRibTrfase_dom"/>
</dbReference>
<dbReference type="InterPro" id="IPR029057">
    <property type="entry name" value="PRTase-like"/>
</dbReference>
<dbReference type="NCBIfam" id="TIGR01367">
    <property type="entry name" value="pyrE_Therm"/>
    <property type="match status" value="1"/>
</dbReference>
<dbReference type="PANTHER" id="PTHR19278">
    <property type="entry name" value="OROTATE PHOSPHORIBOSYLTRANSFERASE"/>
    <property type="match status" value="1"/>
</dbReference>
<dbReference type="PANTHER" id="PTHR19278:SF9">
    <property type="entry name" value="URIDINE 5'-MONOPHOSPHATE SYNTHASE"/>
    <property type="match status" value="1"/>
</dbReference>
<dbReference type="Pfam" id="PF00156">
    <property type="entry name" value="Pribosyltran"/>
    <property type="match status" value="1"/>
</dbReference>
<dbReference type="SUPFAM" id="SSF53271">
    <property type="entry name" value="PRTase-like"/>
    <property type="match status" value="1"/>
</dbReference>
<dbReference type="PROSITE" id="PS00103">
    <property type="entry name" value="PUR_PYR_PR_TRANSFER"/>
    <property type="match status" value="1"/>
</dbReference>
<sequence length="202" mass="21862">MNLEDIYRDAGAYLKGHFLLSSANHSEYYLQSAKVLENPILAGKLADELFEVIKNAGVEFDSVCSPALGGILAGYELARAGAKRFIFTERVEKVMSLRRGFSVAKGEKFIICEDIITTGGSALESAKIIEELGGVVVGFAALANRGFCKVHNMRNEGKSSCKLPADKPLFALGNFEFEIYTPEECPLCKTGSKAIKPGSRGN</sequence>
<comment type="function">
    <text evidence="1">Catalyzes the transfer of a ribosyl phosphate group from 5-phosphoribose 1-diphosphate to orotate, leading to the formation of orotidine monophosphate (OMP).</text>
</comment>
<comment type="catalytic activity">
    <reaction evidence="1">
        <text>orotidine 5'-phosphate + diphosphate = orotate + 5-phospho-alpha-D-ribose 1-diphosphate</text>
        <dbReference type="Rhea" id="RHEA:10380"/>
        <dbReference type="ChEBI" id="CHEBI:30839"/>
        <dbReference type="ChEBI" id="CHEBI:33019"/>
        <dbReference type="ChEBI" id="CHEBI:57538"/>
        <dbReference type="ChEBI" id="CHEBI:58017"/>
        <dbReference type="EC" id="2.4.2.10"/>
    </reaction>
</comment>
<comment type="cofactor">
    <cofactor evidence="1">
        <name>Mg(2+)</name>
        <dbReference type="ChEBI" id="CHEBI:18420"/>
    </cofactor>
</comment>
<comment type="pathway">
    <text evidence="1">Pyrimidine metabolism; UMP biosynthesis via de novo pathway; UMP from orotate: step 1/2.</text>
</comment>
<comment type="subunit">
    <text evidence="1">Homodimer.</text>
</comment>
<comment type="similarity">
    <text evidence="1">Belongs to the purine/pyrimidine phosphoribosyltransferase family. PyrE subfamily.</text>
</comment>
<accession>A0RRR2</accession>